<name>HOA_CHLSY</name>
<sequence>MKPPRLTDTTLRDGSHPMRHQFTRQQVATIVQALDRAGVPVIEVSHGDGLAGSSLQYGFSHTSEFDLIETARQHAERAKIAALMLPGIGTRQELKEAVARGVQVVRIATQCTEADISEQHFGLAKELGLETVGFLMMAHMRPPEELARQAKLMESYGADCVYIVDSAGAMLPQDAAARVQALKDTLSVQVGFHAHNNLGLGIANTLAALEAGADQIDGCLRGLGAGAGNAATELLAAVLDRLGLNPGLDVFSLMDAAEYVVAPIMPFQPFPDRDAITIGYAGVYSTFLLHAKRAGAQYNVDPREILVELGRRQAVAGQEDWIIDVALELSRRHQSSARKESRP</sequence>
<gene>
    <name type="ordered locus">Chy400_1473</name>
</gene>
<accession>B9LCM1</accession>
<comment type="catalytic activity">
    <reaction evidence="1">
        <text>(S)-4-hydroxy-2-oxopentanoate = acetaldehyde + pyruvate</text>
        <dbReference type="Rhea" id="RHEA:22624"/>
        <dbReference type="ChEBI" id="CHEBI:15343"/>
        <dbReference type="ChEBI" id="CHEBI:15361"/>
        <dbReference type="ChEBI" id="CHEBI:73143"/>
        <dbReference type="EC" id="4.1.3.39"/>
    </reaction>
</comment>
<comment type="similarity">
    <text evidence="1">Belongs to the 4-hydroxy-2-oxovalerate aldolase family.</text>
</comment>
<proteinExistence type="inferred from homology"/>
<evidence type="ECO:0000255" key="1">
    <source>
        <dbReference type="HAMAP-Rule" id="MF_01656"/>
    </source>
</evidence>
<reference key="1">
    <citation type="submission" date="2009-01" db="EMBL/GenBank/DDBJ databases">
        <title>Complete sequence of Chloroflexus sp. Y-400-fl.</title>
        <authorList>
            <consortium name="US DOE Joint Genome Institute"/>
            <person name="Lucas S."/>
            <person name="Copeland A."/>
            <person name="Lapidus A."/>
            <person name="Glavina del Rio T."/>
            <person name="Dalin E."/>
            <person name="Tice H."/>
            <person name="Bruce D."/>
            <person name="Goodwin L."/>
            <person name="Pitluck S."/>
            <person name="Sims D."/>
            <person name="Kiss H."/>
            <person name="Brettin T."/>
            <person name="Detter J.C."/>
            <person name="Han C."/>
            <person name="Larimer F."/>
            <person name="Land M."/>
            <person name="Hauser L."/>
            <person name="Kyrpides N."/>
            <person name="Ovchinnikova G."/>
            <person name="Bryant D.A."/>
            <person name="Richardson P."/>
        </authorList>
    </citation>
    <scope>NUCLEOTIDE SEQUENCE [LARGE SCALE GENOMIC DNA]</scope>
    <source>
        <strain>ATCC 29364 / DSM 637 / Y-400-fl</strain>
    </source>
</reference>
<dbReference type="EC" id="4.1.3.39" evidence="1"/>
<dbReference type="EMBL" id="CP001364">
    <property type="protein sequence ID" value="ACM52891.1"/>
    <property type="molecule type" value="Genomic_DNA"/>
</dbReference>
<dbReference type="SMR" id="B9LCM1"/>
<dbReference type="KEGG" id="chl:Chy400_1473"/>
<dbReference type="HOGENOM" id="CLU_049173_0_0_0"/>
<dbReference type="OrthoDB" id="9804858at2"/>
<dbReference type="GO" id="GO:0003852">
    <property type="term" value="F:2-isopropylmalate synthase activity"/>
    <property type="evidence" value="ECO:0007669"/>
    <property type="project" value="TreeGrafter"/>
</dbReference>
<dbReference type="GO" id="GO:0008701">
    <property type="term" value="F:4-hydroxy-2-oxovalerate aldolase activity"/>
    <property type="evidence" value="ECO:0007669"/>
    <property type="project" value="UniProtKB-UniRule"/>
</dbReference>
<dbReference type="GO" id="GO:0030145">
    <property type="term" value="F:manganese ion binding"/>
    <property type="evidence" value="ECO:0007669"/>
    <property type="project" value="UniProtKB-UniRule"/>
</dbReference>
<dbReference type="GO" id="GO:0009056">
    <property type="term" value="P:catabolic process"/>
    <property type="evidence" value="ECO:0007669"/>
    <property type="project" value="UniProtKB-KW"/>
</dbReference>
<dbReference type="GO" id="GO:0009098">
    <property type="term" value="P:L-leucine biosynthetic process"/>
    <property type="evidence" value="ECO:0007669"/>
    <property type="project" value="TreeGrafter"/>
</dbReference>
<dbReference type="CDD" id="cd07943">
    <property type="entry name" value="DRE_TIM_HOA"/>
    <property type="match status" value="1"/>
</dbReference>
<dbReference type="Gene3D" id="1.10.8.60">
    <property type="match status" value="1"/>
</dbReference>
<dbReference type="Gene3D" id="3.20.20.70">
    <property type="entry name" value="Aldolase class I"/>
    <property type="match status" value="1"/>
</dbReference>
<dbReference type="HAMAP" id="MF_01656">
    <property type="entry name" value="HOA"/>
    <property type="match status" value="1"/>
</dbReference>
<dbReference type="InterPro" id="IPR050073">
    <property type="entry name" value="2-IPM_HCS-like"/>
</dbReference>
<dbReference type="InterPro" id="IPR017629">
    <property type="entry name" value="4OH_2_O-val_aldolase"/>
</dbReference>
<dbReference type="InterPro" id="IPR013785">
    <property type="entry name" value="Aldolase_TIM"/>
</dbReference>
<dbReference type="InterPro" id="IPR012425">
    <property type="entry name" value="DmpG_comm"/>
</dbReference>
<dbReference type="InterPro" id="IPR035685">
    <property type="entry name" value="DRE_TIM_HOA"/>
</dbReference>
<dbReference type="InterPro" id="IPR000891">
    <property type="entry name" value="PYR_CT"/>
</dbReference>
<dbReference type="NCBIfam" id="TIGR03217">
    <property type="entry name" value="4OH_2_O_val_ald"/>
    <property type="match status" value="1"/>
</dbReference>
<dbReference type="NCBIfam" id="NF006049">
    <property type="entry name" value="PRK08195.1"/>
    <property type="match status" value="1"/>
</dbReference>
<dbReference type="PANTHER" id="PTHR10277:SF9">
    <property type="entry name" value="2-ISOPROPYLMALATE SYNTHASE 1, CHLOROPLASTIC-RELATED"/>
    <property type="match status" value="1"/>
</dbReference>
<dbReference type="PANTHER" id="PTHR10277">
    <property type="entry name" value="HOMOCITRATE SYNTHASE-RELATED"/>
    <property type="match status" value="1"/>
</dbReference>
<dbReference type="Pfam" id="PF07836">
    <property type="entry name" value="DmpG_comm"/>
    <property type="match status" value="1"/>
</dbReference>
<dbReference type="Pfam" id="PF00682">
    <property type="entry name" value="HMGL-like"/>
    <property type="match status" value="1"/>
</dbReference>
<dbReference type="SUPFAM" id="SSF51569">
    <property type="entry name" value="Aldolase"/>
    <property type="match status" value="1"/>
</dbReference>
<dbReference type="SUPFAM" id="SSF89000">
    <property type="entry name" value="post-HMGL domain-like"/>
    <property type="match status" value="1"/>
</dbReference>
<dbReference type="PROSITE" id="PS50991">
    <property type="entry name" value="PYR_CT"/>
    <property type="match status" value="1"/>
</dbReference>
<feature type="chain" id="PRO_0000387813" description="4-hydroxy-2-oxovalerate aldolase">
    <location>
        <begin position="1"/>
        <end position="343"/>
    </location>
</feature>
<feature type="domain" description="Pyruvate carboxyltransferase" evidence="1">
    <location>
        <begin position="4"/>
        <end position="254"/>
    </location>
</feature>
<feature type="active site" description="Proton acceptor" evidence="1">
    <location>
        <position position="16"/>
    </location>
</feature>
<feature type="binding site" evidence="1">
    <location>
        <begin position="12"/>
        <end position="13"/>
    </location>
    <ligand>
        <name>substrate</name>
    </ligand>
</feature>
<feature type="binding site" evidence="1">
    <location>
        <position position="13"/>
    </location>
    <ligand>
        <name>Mn(2+)</name>
        <dbReference type="ChEBI" id="CHEBI:29035"/>
    </ligand>
</feature>
<feature type="binding site" evidence="1">
    <location>
        <position position="166"/>
    </location>
    <ligand>
        <name>substrate</name>
    </ligand>
</feature>
<feature type="binding site" evidence="1">
    <location>
        <position position="193"/>
    </location>
    <ligand>
        <name>Mn(2+)</name>
        <dbReference type="ChEBI" id="CHEBI:29035"/>
    </ligand>
</feature>
<feature type="binding site" evidence="1">
    <location>
        <position position="193"/>
    </location>
    <ligand>
        <name>substrate</name>
    </ligand>
</feature>
<feature type="binding site" evidence="1">
    <location>
        <position position="195"/>
    </location>
    <ligand>
        <name>Mn(2+)</name>
        <dbReference type="ChEBI" id="CHEBI:29035"/>
    </ligand>
</feature>
<feature type="binding site" evidence="1">
    <location>
        <position position="284"/>
    </location>
    <ligand>
        <name>substrate</name>
    </ligand>
</feature>
<feature type="site" description="Transition state stabilizer" evidence="1">
    <location>
        <position position="12"/>
    </location>
</feature>
<organism>
    <name type="scientific">Chloroflexus aurantiacus (strain ATCC 29364 / DSM 637 / Y-400-fl)</name>
    <dbReference type="NCBI Taxonomy" id="480224"/>
    <lineage>
        <taxon>Bacteria</taxon>
        <taxon>Bacillati</taxon>
        <taxon>Chloroflexota</taxon>
        <taxon>Chloroflexia</taxon>
        <taxon>Chloroflexales</taxon>
        <taxon>Chloroflexineae</taxon>
        <taxon>Chloroflexaceae</taxon>
        <taxon>Chloroflexus</taxon>
    </lineage>
</organism>
<protein>
    <recommendedName>
        <fullName evidence="1">4-hydroxy-2-oxovalerate aldolase</fullName>
        <shortName evidence="1">HOA</shortName>
        <ecNumber evidence="1">4.1.3.39</ecNumber>
    </recommendedName>
    <alternativeName>
        <fullName evidence="1">4-hydroxy-2-keto-pentanoic acid aldolase</fullName>
    </alternativeName>
    <alternativeName>
        <fullName evidence="1">4-hydroxy-2-oxopentanoate aldolase</fullName>
    </alternativeName>
</protein>
<keyword id="KW-0058">Aromatic hydrocarbons catabolism</keyword>
<keyword id="KW-0456">Lyase</keyword>
<keyword id="KW-0464">Manganese</keyword>
<keyword id="KW-0479">Metal-binding</keyword>